<keyword id="KW-0378">Hydrolase</keyword>
<keyword id="KW-0479">Metal-binding</keyword>
<keyword id="KW-0665">Pyrimidine biosynthesis</keyword>
<keyword id="KW-1185">Reference proteome</keyword>
<keyword id="KW-0862">Zinc</keyword>
<name>PYRC_LARHH</name>
<feature type="chain" id="PRO_1000193078" description="Dihydroorotase">
    <location>
        <begin position="1"/>
        <end position="345"/>
    </location>
</feature>
<feature type="active site" evidence="1">
    <location>
        <position position="248"/>
    </location>
</feature>
<feature type="binding site" evidence="1">
    <location>
        <position position="13"/>
    </location>
    <ligand>
        <name>Zn(2+)</name>
        <dbReference type="ChEBI" id="CHEBI:29105"/>
        <label>1</label>
    </ligand>
</feature>
<feature type="binding site" evidence="1">
    <location>
        <begin position="15"/>
        <end position="17"/>
    </location>
    <ligand>
        <name>substrate</name>
    </ligand>
</feature>
<feature type="binding site" evidence="1">
    <location>
        <position position="15"/>
    </location>
    <ligand>
        <name>Zn(2+)</name>
        <dbReference type="ChEBI" id="CHEBI:29105"/>
        <label>1</label>
    </ligand>
</feature>
<feature type="binding site" evidence="1">
    <location>
        <position position="41"/>
    </location>
    <ligand>
        <name>substrate</name>
    </ligand>
</feature>
<feature type="binding site" description="via carbamate group" evidence="1">
    <location>
        <position position="100"/>
    </location>
    <ligand>
        <name>Zn(2+)</name>
        <dbReference type="ChEBI" id="CHEBI:29105"/>
        <label>1</label>
    </ligand>
</feature>
<feature type="binding site" description="via carbamate group" evidence="1">
    <location>
        <position position="100"/>
    </location>
    <ligand>
        <name>Zn(2+)</name>
        <dbReference type="ChEBI" id="CHEBI:29105"/>
        <label>2</label>
    </ligand>
</feature>
<feature type="binding site" evidence="1">
    <location>
        <position position="137"/>
    </location>
    <ligand>
        <name>substrate</name>
    </ligand>
</feature>
<feature type="binding site" evidence="1">
    <location>
        <position position="137"/>
    </location>
    <ligand>
        <name>Zn(2+)</name>
        <dbReference type="ChEBI" id="CHEBI:29105"/>
        <label>2</label>
    </ligand>
</feature>
<feature type="binding site" evidence="1">
    <location>
        <position position="175"/>
    </location>
    <ligand>
        <name>Zn(2+)</name>
        <dbReference type="ChEBI" id="CHEBI:29105"/>
        <label>2</label>
    </ligand>
</feature>
<feature type="binding site" evidence="1">
    <location>
        <position position="220"/>
    </location>
    <ligand>
        <name>substrate</name>
    </ligand>
</feature>
<feature type="binding site" evidence="1">
    <location>
        <position position="248"/>
    </location>
    <ligand>
        <name>Zn(2+)</name>
        <dbReference type="ChEBI" id="CHEBI:29105"/>
        <label>1</label>
    </ligand>
</feature>
<feature type="binding site" evidence="1">
    <location>
        <position position="252"/>
    </location>
    <ligand>
        <name>substrate</name>
    </ligand>
</feature>
<feature type="binding site" evidence="1">
    <location>
        <position position="264"/>
    </location>
    <ligand>
        <name>substrate</name>
    </ligand>
</feature>
<feature type="modified residue" description="N6-carboxylysine" evidence="1">
    <location>
        <position position="100"/>
    </location>
</feature>
<protein>
    <recommendedName>
        <fullName evidence="1">Dihydroorotase</fullName>
        <shortName evidence="1">DHOase</shortName>
        <ecNumber evidence="1">3.5.2.3</ecNumber>
    </recommendedName>
</protein>
<gene>
    <name evidence="1" type="primary">pyrC</name>
    <name type="ordered locus">LHK_03129</name>
</gene>
<accession>C1D672</accession>
<sequence length="345" mass="37353">MHTLTLTRPDDWHLHLRDGEALAAVAAYSAREFARAIVMPNLKPPVTTVVQAAAYRERILAALPPGGPAFEPLMTLYLTDNTPPAEIDRVAESGFVHALKLYPAGATTNSDAGVTSLSGCLPTLTRMAELGVPLLVHGEVTDPQIDVFDREAVFIDTVLQPLLAELPTLRVVMEHITTRQAAEFVLAAPDNIAATVTPQHMLMNRNALFTGGLRPHHYCLPVLKREEHRAAIARAVTSGSTRFFLGTDSAPHARHAKEAACGCAGIFSAHAALPLYAEAFEDAGALDRLEAFASFNGPDFYRLPRNTGTVTLKREEWTVPASLPYGNDTLVPLRAGETLRWQLAG</sequence>
<organism>
    <name type="scientific">Laribacter hongkongensis (strain HLHK9)</name>
    <dbReference type="NCBI Taxonomy" id="557598"/>
    <lineage>
        <taxon>Bacteria</taxon>
        <taxon>Pseudomonadati</taxon>
        <taxon>Pseudomonadota</taxon>
        <taxon>Betaproteobacteria</taxon>
        <taxon>Neisseriales</taxon>
        <taxon>Aquaspirillaceae</taxon>
        <taxon>Laribacter</taxon>
    </lineage>
</organism>
<evidence type="ECO:0000255" key="1">
    <source>
        <dbReference type="HAMAP-Rule" id="MF_00219"/>
    </source>
</evidence>
<dbReference type="EC" id="3.5.2.3" evidence="1"/>
<dbReference type="EMBL" id="CP001154">
    <property type="protein sequence ID" value="ACO76107.1"/>
    <property type="molecule type" value="Genomic_DNA"/>
</dbReference>
<dbReference type="RefSeq" id="WP_012698570.1">
    <property type="nucleotide sequence ID" value="NC_012559.1"/>
</dbReference>
<dbReference type="SMR" id="C1D672"/>
<dbReference type="STRING" id="557598.LHK_03129"/>
<dbReference type="GeneID" id="75108324"/>
<dbReference type="KEGG" id="lhk:LHK_03129"/>
<dbReference type="eggNOG" id="COG0418">
    <property type="taxonomic scope" value="Bacteria"/>
</dbReference>
<dbReference type="HOGENOM" id="CLU_041558_1_0_4"/>
<dbReference type="UniPathway" id="UPA00070">
    <property type="reaction ID" value="UER00117"/>
</dbReference>
<dbReference type="Proteomes" id="UP000002010">
    <property type="component" value="Chromosome"/>
</dbReference>
<dbReference type="GO" id="GO:0005737">
    <property type="term" value="C:cytoplasm"/>
    <property type="evidence" value="ECO:0007669"/>
    <property type="project" value="TreeGrafter"/>
</dbReference>
<dbReference type="GO" id="GO:0004151">
    <property type="term" value="F:dihydroorotase activity"/>
    <property type="evidence" value="ECO:0007669"/>
    <property type="project" value="UniProtKB-UniRule"/>
</dbReference>
<dbReference type="GO" id="GO:0008270">
    <property type="term" value="F:zinc ion binding"/>
    <property type="evidence" value="ECO:0007669"/>
    <property type="project" value="UniProtKB-UniRule"/>
</dbReference>
<dbReference type="GO" id="GO:0006207">
    <property type="term" value="P:'de novo' pyrimidine nucleobase biosynthetic process"/>
    <property type="evidence" value="ECO:0007669"/>
    <property type="project" value="TreeGrafter"/>
</dbReference>
<dbReference type="GO" id="GO:0044205">
    <property type="term" value="P:'de novo' UMP biosynthetic process"/>
    <property type="evidence" value="ECO:0007669"/>
    <property type="project" value="UniProtKB-UniRule"/>
</dbReference>
<dbReference type="CDD" id="cd01294">
    <property type="entry name" value="DHOase"/>
    <property type="match status" value="1"/>
</dbReference>
<dbReference type="FunFam" id="3.20.20.140:FF:000006">
    <property type="entry name" value="Dihydroorotase"/>
    <property type="match status" value="1"/>
</dbReference>
<dbReference type="Gene3D" id="3.20.20.140">
    <property type="entry name" value="Metal-dependent hydrolases"/>
    <property type="match status" value="1"/>
</dbReference>
<dbReference type="HAMAP" id="MF_00219">
    <property type="entry name" value="PyrC_classII"/>
    <property type="match status" value="1"/>
</dbReference>
<dbReference type="InterPro" id="IPR006680">
    <property type="entry name" value="Amidohydro-rel"/>
</dbReference>
<dbReference type="InterPro" id="IPR004721">
    <property type="entry name" value="DHOdimr"/>
</dbReference>
<dbReference type="InterPro" id="IPR002195">
    <property type="entry name" value="Dihydroorotase_CS"/>
</dbReference>
<dbReference type="InterPro" id="IPR032466">
    <property type="entry name" value="Metal_Hydrolase"/>
</dbReference>
<dbReference type="NCBIfam" id="TIGR00856">
    <property type="entry name" value="pyrC_dimer"/>
    <property type="match status" value="1"/>
</dbReference>
<dbReference type="PANTHER" id="PTHR43137">
    <property type="entry name" value="DIHYDROOROTASE"/>
    <property type="match status" value="1"/>
</dbReference>
<dbReference type="PANTHER" id="PTHR43137:SF1">
    <property type="entry name" value="DIHYDROOROTASE"/>
    <property type="match status" value="1"/>
</dbReference>
<dbReference type="Pfam" id="PF01979">
    <property type="entry name" value="Amidohydro_1"/>
    <property type="match status" value="1"/>
</dbReference>
<dbReference type="PIRSF" id="PIRSF001237">
    <property type="entry name" value="DHOdimr"/>
    <property type="match status" value="1"/>
</dbReference>
<dbReference type="SUPFAM" id="SSF51556">
    <property type="entry name" value="Metallo-dependent hydrolases"/>
    <property type="match status" value="1"/>
</dbReference>
<dbReference type="PROSITE" id="PS00482">
    <property type="entry name" value="DIHYDROOROTASE_1"/>
    <property type="match status" value="1"/>
</dbReference>
<dbReference type="PROSITE" id="PS00483">
    <property type="entry name" value="DIHYDROOROTASE_2"/>
    <property type="match status" value="1"/>
</dbReference>
<reference key="1">
    <citation type="journal article" date="2009" name="PLoS Genet.">
        <title>The complete genome and proteome of Laribacter hongkongensis reveal potential mechanisms for adaptations to different temperatures and habitats.</title>
        <authorList>
            <person name="Woo P.C.Y."/>
            <person name="Lau S.K.P."/>
            <person name="Tse H."/>
            <person name="Teng J.L.L."/>
            <person name="Curreem S.O."/>
            <person name="Tsang A.K.L."/>
            <person name="Fan R.Y.Y."/>
            <person name="Wong G.K.M."/>
            <person name="Huang Y."/>
            <person name="Loman N.J."/>
            <person name="Snyder L.A.S."/>
            <person name="Cai J.J."/>
            <person name="Huang J.-D."/>
            <person name="Mak W."/>
            <person name="Pallen M.J."/>
            <person name="Lok S."/>
            <person name="Yuen K.-Y."/>
        </authorList>
    </citation>
    <scope>NUCLEOTIDE SEQUENCE [LARGE SCALE GENOMIC DNA]</scope>
    <source>
        <strain>HLHK9</strain>
    </source>
</reference>
<proteinExistence type="inferred from homology"/>
<comment type="function">
    <text evidence="1">Catalyzes the reversible cyclization of carbamoyl aspartate to dihydroorotate.</text>
</comment>
<comment type="catalytic activity">
    <reaction evidence="1">
        <text>(S)-dihydroorotate + H2O = N-carbamoyl-L-aspartate + H(+)</text>
        <dbReference type="Rhea" id="RHEA:24296"/>
        <dbReference type="ChEBI" id="CHEBI:15377"/>
        <dbReference type="ChEBI" id="CHEBI:15378"/>
        <dbReference type="ChEBI" id="CHEBI:30864"/>
        <dbReference type="ChEBI" id="CHEBI:32814"/>
        <dbReference type="EC" id="3.5.2.3"/>
    </reaction>
</comment>
<comment type="cofactor">
    <cofactor evidence="1">
        <name>Zn(2+)</name>
        <dbReference type="ChEBI" id="CHEBI:29105"/>
    </cofactor>
    <text evidence="1">Binds 2 Zn(2+) ions per subunit.</text>
</comment>
<comment type="pathway">
    <text evidence="1">Pyrimidine metabolism; UMP biosynthesis via de novo pathway; (S)-dihydroorotate from bicarbonate: step 3/3.</text>
</comment>
<comment type="subunit">
    <text evidence="1">Homodimer.</text>
</comment>
<comment type="similarity">
    <text evidence="1">Belongs to the metallo-dependent hydrolases superfamily. DHOase family. Class II DHOase subfamily.</text>
</comment>